<proteinExistence type="inferred from homology"/>
<reference key="1">
    <citation type="journal article" date="1997" name="Nature">
        <title>The complete genome sequence of the hyperthermophilic, sulphate-reducing archaeon Archaeoglobus fulgidus.</title>
        <authorList>
            <person name="Klenk H.-P."/>
            <person name="Clayton R.A."/>
            <person name="Tomb J.-F."/>
            <person name="White O."/>
            <person name="Nelson K.E."/>
            <person name="Ketchum K.A."/>
            <person name="Dodson R.J."/>
            <person name="Gwinn M.L."/>
            <person name="Hickey E.K."/>
            <person name="Peterson J.D."/>
            <person name="Richardson D.L."/>
            <person name="Kerlavage A.R."/>
            <person name="Graham D.E."/>
            <person name="Kyrpides N.C."/>
            <person name="Fleischmann R.D."/>
            <person name="Quackenbush J."/>
            <person name="Lee N.H."/>
            <person name="Sutton G.G."/>
            <person name="Gill S.R."/>
            <person name="Kirkness E.F."/>
            <person name="Dougherty B.A."/>
            <person name="McKenney K."/>
            <person name="Adams M.D."/>
            <person name="Loftus B.J."/>
            <person name="Peterson S.N."/>
            <person name="Reich C.I."/>
            <person name="McNeil L.K."/>
            <person name="Badger J.H."/>
            <person name="Glodek A."/>
            <person name="Zhou L."/>
            <person name="Overbeek R."/>
            <person name="Gocayne J.D."/>
            <person name="Weidman J.F."/>
            <person name="McDonald L.A."/>
            <person name="Utterback T.R."/>
            <person name="Cotton M.D."/>
            <person name="Spriggs T."/>
            <person name="Artiach P."/>
            <person name="Kaine B.P."/>
            <person name="Sykes S.M."/>
            <person name="Sadow P.W."/>
            <person name="D'Andrea K.P."/>
            <person name="Bowman C."/>
            <person name="Fujii C."/>
            <person name="Garland S.A."/>
            <person name="Mason T.M."/>
            <person name="Olsen G.J."/>
            <person name="Fraser C.M."/>
            <person name="Smith H.O."/>
            <person name="Woese C.R."/>
            <person name="Venter J.C."/>
        </authorList>
    </citation>
    <scope>NUCLEOTIDE SEQUENCE [LARGE SCALE GENOMIC DNA]</scope>
    <source>
        <strain>ATCC 49558 / DSM 4304 / JCM 9628 / NBRC 100126 / VC-16</strain>
    </source>
</reference>
<comment type="function">
    <text evidence="1">Catalyzes the stereoinversion of LL-2,6-diaminopimelate (L,L-DAP) to meso-diaminopimelate (meso-DAP), a precursor of L-lysine.</text>
</comment>
<comment type="catalytic activity">
    <reaction evidence="1">
        <text>(2S,6S)-2,6-diaminopimelate = meso-2,6-diaminopimelate</text>
        <dbReference type="Rhea" id="RHEA:15393"/>
        <dbReference type="ChEBI" id="CHEBI:57609"/>
        <dbReference type="ChEBI" id="CHEBI:57791"/>
        <dbReference type="EC" id="5.1.1.7"/>
    </reaction>
</comment>
<comment type="pathway">
    <text evidence="1">Amino-acid biosynthesis; L-lysine biosynthesis via DAP pathway; DL-2,6-diaminopimelate from LL-2,6-diaminopimelate: step 1/1.</text>
</comment>
<comment type="subunit">
    <text evidence="1">Homodimer.</text>
</comment>
<comment type="subcellular location">
    <subcellularLocation>
        <location evidence="1">Cytoplasm</location>
    </subcellularLocation>
</comment>
<comment type="similarity">
    <text evidence="1">Belongs to the diaminopimelate epimerase family.</text>
</comment>
<keyword id="KW-0028">Amino-acid biosynthesis</keyword>
<keyword id="KW-0963">Cytoplasm</keyword>
<keyword id="KW-0413">Isomerase</keyword>
<keyword id="KW-0457">Lysine biosynthesis</keyword>
<keyword id="KW-1185">Reference proteome</keyword>
<feature type="chain" id="PRO_0000149885" description="Diaminopimelate epimerase">
    <location>
        <begin position="1"/>
        <end position="280"/>
    </location>
</feature>
<feature type="active site" description="Proton donor" evidence="1">
    <location>
        <position position="76"/>
    </location>
</feature>
<feature type="active site" description="Proton acceptor" evidence="1">
    <location>
        <position position="218"/>
    </location>
</feature>
<feature type="binding site" evidence="1">
    <location>
        <position position="13"/>
    </location>
    <ligand>
        <name>substrate</name>
    </ligand>
</feature>
<feature type="binding site" evidence="1">
    <location>
        <position position="67"/>
    </location>
    <ligand>
        <name>substrate</name>
    </ligand>
</feature>
<feature type="binding site" evidence="1">
    <location>
        <begin position="77"/>
        <end position="78"/>
    </location>
    <ligand>
        <name>substrate</name>
    </ligand>
</feature>
<feature type="binding site" evidence="1">
    <location>
        <position position="191"/>
    </location>
    <ligand>
        <name>substrate</name>
    </ligand>
</feature>
<feature type="binding site" evidence="1">
    <location>
        <begin position="208"/>
        <end position="209"/>
    </location>
    <ligand>
        <name>substrate</name>
    </ligand>
</feature>
<feature type="binding site" evidence="1">
    <location>
        <begin position="219"/>
        <end position="220"/>
    </location>
    <ligand>
        <name>substrate</name>
    </ligand>
</feature>
<feature type="site" description="Could be important to modulate the pK values of the two catalytic cysteine residues" evidence="1">
    <location>
        <position position="161"/>
    </location>
</feature>
<feature type="site" description="Could be important to modulate the pK values of the two catalytic cysteine residues" evidence="1">
    <location>
        <position position="208"/>
    </location>
</feature>
<organism>
    <name type="scientific">Archaeoglobus fulgidus (strain ATCC 49558 / DSM 4304 / JCM 9628 / NBRC 100126 / VC-16)</name>
    <dbReference type="NCBI Taxonomy" id="224325"/>
    <lineage>
        <taxon>Archaea</taxon>
        <taxon>Methanobacteriati</taxon>
        <taxon>Methanobacteriota</taxon>
        <taxon>Archaeoglobi</taxon>
        <taxon>Archaeoglobales</taxon>
        <taxon>Archaeoglobaceae</taxon>
        <taxon>Archaeoglobus</taxon>
    </lineage>
</organism>
<name>DAPF_ARCFU</name>
<dbReference type="EC" id="5.1.1.7" evidence="1"/>
<dbReference type="EMBL" id="AE000782">
    <property type="protein sequence ID" value="AAB90492.1"/>
    <property type="molecule type" value="Genomic_DNA"/>
</dbReference>
<dbReference type="PIR" id="C69343">
    <property type="entry name" value="C69343"/>
</dbReference>
<dbReference type="RefSeq" id="WP_010878250.1">
    <property type="nucleotide sequence ID" value="NC_000917.1"/>
</dbReference>
<dbReference type="SMR" id="O29511"/>
<dbReference type="STRING" id="224325.AF_0747"/>
<dbReference type="PaxDb" id="224325-AF_0747"/>
<dbReference type="EnsemblBacteria" id="AAB90492">
    <property type="protein sequence ID" value="AAB90492"/>
    <property type="gene ID" value="AF_0747"/>
</dbReference>
<dbReference type="GeneID" id="24794345"/>
<dbReference type="KEGG" id="afu:AF_0747"/>
<dbReference type="eggNOG" id="arCOG02255">
    <property type="taxonomic scope" value="Archaea"/>
</dbReference>
<dbReference type="HOGENOM" id="CLU_053306_3_0_2"/>
<dbReference type="OrthoDB" id="358699at2157"/>
<dbReference type="PhylomeDB" id="O29511"/>
<dbReference type="UniPathway" id="UPA00034">
    <property type="reaction ID" value="UER00025"/>
</dbReference>
<dbReference type="Proteomes" id="UP000002199">
    <property type="component" value="Chromosome"/>
</dbReference>
<dbReference type="GO" id="GO:0005829">
    <property type="term" value="C:cytosol"/>
    <property type="evidence" value="ECO:0007669"/>
    <property type="project" value="TreeGrafter"/>
</dbReference>
<dbReference type="GO" id="GO:0008837">
    <property type="term" value="F:diaminopimelate epimerase activity"/>
    <property type="evidence" value="ECO:0007669"/>
    <property type="project" value="UniProtKB-UniRule"/>
</dbReference>
<dbReference type="GO" id="GO:0009089">
    <property type="term" value="P:lysine biosynthetic process via diaminopimelate"/>
    <property type="evidence" value="ECO:0007669"/>
    <property type="project" value="UniProtKB-UniRule"/>
</dbReference>
<dbReference type="FunFam" id="3.10.310.10:FF:000001">
    <property type="entry name" value="Diaminopimelate epimerase"/>
    <property type="match status" value="1"/>
</dbReference>
<dbReference type="Gene3D" id="3.10.310.10">
    <property type="entry name" value="Diaminopimelate Epimerase, Chain A, domain 1"/>
    <property type="match status" value="2"/>
</dbReference>
<dbReference type="HAMAP" id="MF_00197">
    <property type="entry name" value="DAP_epimerase"/>
    <property type="match status" value="1"/>
</dbReference>
<dbReference type="InterPro" id="IPR018510">
    <property type="entry name" value="DAP_epimerase_AS"/>
</dbReference>
<dbReference type="InterPro" id="IPR001653">
    <property type="entry name" value="DAP_epimerase_DapF"/>
</dbReference>
<dbReference type="NCBIfam" id="TIGR00652">
    <property type="entry name" value="DapF"/>
    <property type="match status" value="1"/>
</dbReference>
<dbReference type="PANTHER" id="PTHR31689:SF0">
    <property type="entry name" value="DIAMINOPIMELATE EPIMERASE"/>
    <property type="match status" value="1"/>
</dbReference>
<dbReference type="PANTHER" id="PTHR31689">
    <property type="entry name" value="DIAMINOPIMELATE EPIMERASE, CHLOROPLASTIC"/>
    <property type="match status" value="1"/>
</dbReference>
<dbReference type="Pfam" id="PF01678">
    <property type="entry name" value="DAP_epimerase"/>
    <property type="match status" value="2"/>
</dbReference>
<dbReference type="SUPFAM" id="SSF54506">
    <property type="entry name" value="Diaminopimelate epimerase-like"/>
    <property type="match status" value="2"/>
</dbReference>
<dbReference type="PROSITE" id="PS01326">
    <property type="entry name" value="DAP_EPIMERASE"/>
    <property type="match status" value="1"/>
</dbReference>
<protein>
    <recommendedName>
        <fullName evidence="1">Diaminopimelate epimerase</fullName>
        <shortName evidence="1">DAP epimerase</shortName>
        <ecNumber evidence="1">5.1.1.7</ecNumber>
    </recommendedName>
    <alternativeName>
        <fullName evidence="1">PLP-independent amino acid racemase</fullName>
    </alternativeName>
</protein>
<accession>O29511</accession>
<sequence length="280" mass="31023">MRIAFTKMHGNGNDFVLIDEFEGVIVGEEEKPRFVRAVCHRNFGVGADGALFVQPSQKADVRFRYFNSDGSEAAMCGNGIRCFSRYVVEEGYAGERLRVETLAGILELEVKRENGWWVKVDMGKPKFGREEIPAKTDVWGYEVEHDGRKFRIYAANTGVPHVAVFVDSLDFDIVPLARKIRYSEIFPEGTNVNFAKVDGDTITVRTYERGVEGETLSCGTGSVAVAAIANRLGLTGSKVDVVTKGGLLKIELTEDTAYMTGGASRVFDGILRLNELRYDI</sequence>
<evidence type="ECO:0000255" key="1">
    <source>
        <dbReference type="HAMAP-Rule" id="MF_00197"/>
    </source>
</evidence>
<gene>
    <name evidence="1" type="primary">dapF</name>
    <name type="ordered locus">AF_0747</name>
</gene>